<proteinExistence type="inferred from homology"/>
<protein>
    <recommendedName>
        <fullName evidence="1">3-dehydroquinate dehydratase</fullName>
        <shortName evidence="1">3-dehydroquinase</shortName>
        <ecNumber evidence="1">4.2.1.10</ecNumber>
    </recommendedName>
    <alternativeName>
        <fullName evidence="1">Type II DHQase</fullName>
    </alternativeName>
</protein>
<gene>
    <name evidence="1" type="primary">aroQ</name>
    <name type="ordered locus">NIS_0430</name>
</gene>
<accession>A6Q235</accession>
<name>AROQ_NITSB</name>
<comment type="function">
    <text evidence="1">Catalyzes a trans-dehydration via an enolate intermediate.</text>
</comment>
<comment type="catalytic activity">
    <reaction evidence="1">
        <text>3-dehydroquinate = 3-dehydroshikimate + H2O</text>
        <dbReference type="Rhea" id="RHEA:21096"/>
        <dbReference type="ChEBI" id="CHEBI:15377"/>
        <dbReference type="ChEBI" id="CHEBI:16630"/>
        <dbReference type="ChEBI" id="CHEBI:32364"/>
        <dbReference type="EC" id="4.2.1.10"/>
    </reaction>
</comment>
<comment type="pathway">
    <text evidence="1">Metabolic intermediate biosynthesis; chorismate biosynthesis; chorismate from D-erythrose 4-phosphate and phosphoenolpyruvate: step 3/7.</text>
</comment>
<comment type="subunit">
    <text evidence="1">Homododecamer.</text>
</comment>
<comment type="similarity">
    <text evidence="1">Belongs to the type-II 3-dehydroquinase family.</text>
</comment>
<reference key="1">
    <citation type="journal article" date="2007" name="Proc. Natl. Acad. Sci. U.S.A.">
        <title>Deep-sea vent epsilon-proteobacterial genomes provide insights into emergence of pathogens.</title>
        <authorList>
            <person name="Nakagawa S."/>
            <person name="Takaki Y."/>
            <person name="Shimamura S."/>
            <person name="Reysenbach A.-L."/>
            <person name="Takai K."/>
            <person name="Horikoshi K."/>
        </authorList>
    </citation>
    <scope>NUCLEOTIDE SEQUENCE [LARGE SCALE GENOMIC DNA]</scope>
    <source>
        <strain>SB155-2</strain>
    </source>
</reference>
<keyword id="KW-0028">Amino-acid biosynthesis</keyword>
<keyword id="KW-0057">Aromatic amino acid biosynthesis</keyword>
<keyword id="KW-0456">Lyase</keyword>
<keyword id="KW-1185">Reference proteome</keyword>
<organism>
    <name type="scientific">Nitratiruptor sp. (strain SB155-2)</name>
    <dbReference type="NCBI Taxonomy" id="387092"/>
    <lineage>
        <taxon>Bacteria</taxon>
        <taxon>Pseudomonadati</taxon>
        <taxon>Campylobacterota</taxon>
        <taxon>Epsilonproteobacteria</taxon>
        <taxon>Nautiliales</taxon>
        <taxon>Nitratiruptoraceae</taxon>
        <taxon>Nitratiruptor</taxon>
    </lineage>
</organism>
<feature type="chain" id="PRO_1000023491" description="3-dehydroquinate dehydratase">
    <location>
        <begin position="1"/>
        <end position="156"/>
    </location>
</feature>
<feature type="active site" description="Proton acceptor" evidence="1">
    <location>
        <position position="22"/>
    </location>
</feature>
<feature type="active site" description="Proton donor" evidence="1">
    <location>
        <position position="99"/>
    </location>
</feature>
<feature type="binding site" evidence="1">
    <location>
        <position position="73"/>
    </location>
    <ligand>
        <name>substrate</name>
    </ligand>
</feature>
<feature type="binding site" evidence="1">
    <location>
        <position position="79"/>
    </location>
    <ligand>
        <name>substrate</name>
    </ligand>
</feature>
<feature type="binding site" evidence="1">
    <location>
        <position position="86"/>
    </location>
    <ligand>
        <name>substrate</name>
    </ligand>
</feature>
<feature type="binding site" evidence="1">
    <location>
        <begin position="100"/>
        <end position="101"/>
    </location>
    <ligand>
        <name>substrate</name>
    </ligand>
</feature>
<feature type="binding site" evidence="1">
    <location>
        <position position="110"/>
    </location>
    <ligand>
        <name>substrate</name>
    </ligand>
</feature>
<feature type="site" description="Transition state stabilizer" evidence="1">
    <location>
        <position position="17"/>
    </location>
</feature>
<sequence length="156" mass="17380">MKVMVIQGPNLNMLGIREQHIYGPMKLEDIHKQMKNFADANGLDIEFFQSNLEGEIVDKIQESLGDADGIIINAGAYTHTSIAIRDAIAAVQLPTIEVHLSNVYRREEFRQKSMIAPVCAGVITGFGPFSYHLAMVAMHQIFQEIEALKAQQPQQA</sequence>
<evidence type="ECO:0000255" key="1">
    <source>
        <dbReference type="HAMAP-Rule" id="MF_00169"/>
    </source>
</evidence>
<dbReference type="EC" id="4.2.1.10" evidence="1"/>
<dbReference type="EMBL" id="AP009178">
    <property type="protein sequence ID" value="BAF69544.1"/>
    <property type="molecule type" value="Genomic_DNA"/>
</dbReference>
<dbReference type="RefSeq" id="WP_012081807.1">
    <property type="nucleotide sequence ID" value="NC_009662.1"/>
</dbReference>
<dbReference type="SMR" id="A6Q235"/>
<dbReference type="STRING" id="387092.NIS_0430"/>
<dbReference type="KEGG" id="nis:NIS_0430"/>
<dbReference type="eggNOG" id="COG0757">
    <property type="taxonomic scope" value="Bacteria"/>
</dbReference>
<dbReference type="HOGENOM" id="CLU_090968_2_0_7"/>
<dbReference type="InParanoid" id="A6Q235"/>
<dbReference type="OrthoDB" id="9790793at2"/>
<dbReference type="UniPathway" id="UPA00053">
    <property type="reaction ID" value="UER00086"/>
</dbReference>
<dbReference type="Proteomes" id="UP000001118">
    <property type="component" value="Chromosome"/>
</dbReference>
<dbReference type="GO" id="GO:0003855">
    <property type="term" value="F:3-dehydroquinate dehydratase activity"/>
    <property type="evidence" value="ECO:0007669"/>
    <property type="project" value="UniProtKB-UniRule"/>
</dbReference>
<dbReference type="GO" id="GO:0008652">
    <property type="term" value="P:amino acid biosynthetic process"/>
    <property type="evidence" value="ECO:0007669"/>
    <property type="project" value="UniProtKB-KW"/>
</dbReference>
<dbReference type="GO" id="GO:0009073">
    <property type="term" value="P:aromatic amino acid family biosynthetic process"/>
    <property type="evidence" value="ECO:0007669"/>
    <property type="project" value="UniProtKB-KW"/>
</dbReference>
<dbReference type="GO" id="GO:0009423">
    <property type="term" value="P:chorismate biosynthetic process"/>
    <property type="evidence" value="ECO:0007669"/>
    <property type="project" value="UniProtKB-UniRule"/>
</dbReference>
<dbReference type="GO" id="GO:0019631">
    <property type="term" value="P:quinate catabolic process"/>
    <property type="evidence" value="ECO:0007669"/>
    <property type="project" value="TreeGrafter"/>
</dbReference>
<dbReference type="CDD" id="cd00466">
    <property type="entry name" value="DHQase_II"/>
    <property type="match status" value="1"/>
</dbReference>
<dbReference type="Gene3D" id="3.40.50.9100">
    <property type="entry name" value="Dehydroquinase, class II"/>
    <property type="match status" value="1"/>
</dbReference>
<dbReference type="HAMAP" id="MF_00169">
    <property type="entry name" value="AroQ"/>
    <property type="match status" value="1"/>
</dbReference>
<dbReference type="InterPro" id="IPR001874">
    <property type="entry name" value="DHquinase_II"/>
</dbReference>
<dbReference type="InterPro" id="IPR018509">
    <property type="entry name" value="DHquinase_II_CS"/>
</dbReference>
<dbReference type="InterPro" id="IPR036441">
    <property type="entry name" value="DHquinase_II_sf"/>
</dbReference>
<dbReference type="NCBIfam" id="TIGR01088">
    <property type="entry name" value="aroQ"/>
    <property type="match status" value="1"/>
</dbReference>
<dbReference type="NCBIfam" id="NF003805">
    <property type="entry name" value="PRK05395.1-2"/>
    <property type="match status" value="1"/>
</dbReference>
<dbReference type="NCBIfam" id="NF003806">
    <property type="entry name" value="PRK05395.1-3"/>
    <property type="match status" value="1"/>
</dbReference>
<dbReference type="NCBIfam" id="NF003807">
    <property type="entry name" value="PRK05395.1-4"/>
    <property type="match status" value="1"/>
</dbReference>
<dbReference type="PANTHER" id="PTHR21272">
    <property type="entry name" value="CATABOLIC 3-DEHYDROQUINASE"/>
    <property type="match status" value="1"/>
</dbReference>
<dbReference type="PANTHER" id="PTHR21272:SF3">
    <property type="entry name" value="CATABOLIC 3-DEHYDROQUINASE"/>
    <property type="match status" value="1"/>
</dbReference>
<dbReference type="Pfam" id="PF01220">
    <property type="entry name" value="DHquinase_II"/>
    <property type="match status" value="1"/>
</dbReference>
<dbReference type="PIRSF" id="PIRSF001399">
    <property type="entry name" value="DHquinase_II"/>
    <property type="match status" value="1"/>
</dbReference>
<dbReference type="SUPFAM" id="SSF52304">
    <property type="entry name" value="Type II 3-dehydroquinate dehydratase"/>
    <property type="match status" value="1"/>
</dbReference>
<dbReference type="PROSITE" id="PS01029">
    <property type="entry name" value="DEHYDROQUINASE_II"/>
    <property type="match status" value="1"/>
</dbReference>